<feature type="chain" id="PRO_0000090412" description="Reaction center protein M chain">
    <location>
        <begin position="1"/>
        <end position="325"/>
    </location>
</feature>
<feature type="transmembrane region" description="Helical" evidence="2">
    <location>
        <begin position="53"/>
        <end position="79"/>
    </location>
</feature>
<feature type="transmembrane region" description="Helical" evidence="2">
    <location>
        <begin position="111"/>
        <end position="140"/>
    </location>
</feature>
<feature type="transmembrane region" description="Helical" evidence="2">
    <location>
        <begin position="143"/>
        <end position="168"/>
    </location>
</feature>
<feature type="transmembrane region" description="Helical" evidence="2">
    <location>
        <begin position="198"/>
        <end position="226"/>
    </location>
</feature>
<feature type="binding site" description="axial binding residue" evidence="1">
    <location>
        <position position="182"/>
    </location>
    <ligand>
        <name>(7R,8Z)-bacteriochlorophyll b</name>
        <dbReference type="ChEBI" id="CHEBI:30034"/>
    </ligand>
    <ligandPart>
        <name>Mg</name>
        <dbReference type="ChEBI" id="CHEBI:25107"/>
    </ligandPart>
</feature>
<feature type="binding site" description="axial binding residue" evidence="1">
    <location>
        <position position="202"/>
    </location>
    <ligand>
        <name>(7R,8Z)-bacteriochlorophyll b</name>
        <dbReference type="ChEBI" id="CHEBI:30034"/>
    </ligand>
    <ligandPart>
        <name>Mg</name>
        <dbReference type="ChEBI" id="CHEBI:25107"/>
    </ligandPart>
</feature>
<feature type="binding site" evidence="1">
    <location>
        <position position="219"/>
    </location>
    <ligand>
        <name>Fe cation</name>
        <dbReference type="ChEBI" id="CHEBI:24875"/>
    </ligand>
</feature>
<feature type="binding site" evidence="1">
    <location>
        <position position="234"/>
    </location>
    <ligand>
        <name>Fe cation</name>
        <dbReference type="ChEBI" id="CHEBI:24875"/>
    </ligand>
</feature>
<feature type="binding site" evidence="1">
    <location>
        <position position="252"/>
    </location>
    <ligand>
        <name>a ubiquinone</name>
        <dbReference type="ChEBI" id="CHEBI:16389"/>
    </ligand>
</feature>
<feature type="binding site" evidence="1">
    <location>
        <position position="266"/>
    </location>
    <ligand>
        <name>Fe cation</name>
        <dbReference type="ChEBI" id="CHEBI:24875"/>
    </ligand>
</feature>
<feature type="sequence conflict" description="In Ref. 3; BAA21083." evidence="3" ref="3">
    <original>Q</original>
    <variation>E</variation>
    <location>
        <position position="47"/>
    </location>
</feature>
<feature type="sequence conflict" description="In Ref. 3; BAA21083." evidence="3" ref="3">
    <original>G</original>
    <variation>A</variation>
    <location>
        <position position="54"/>
    </location>
</feature>
<feature type="sequence conflict" description="In Ref. 3; BAA21083." evidence="3" ref="3">
    <original>Q</original>
    <variation>K</variation>
    <location>
        <position position="101"/>
    </location>
</feature>
<feature type="strand" evidence="4">
    <location>
        <begin position="6"/>
        <end position="8"/>
    </location>
</feature>
<feature type="strand" evidence="5">
    <location>
        <begin position="10"/>
        <end position="14"/>
    </location>
</feature>
<feature type="helix" evidence="4">
    <location>
        <begin position="38"/>
        <end position="43"/>
    </location>
</feature>
<feature type="helix" evidence="4">
    <location>
        <begin position="55"/>
        <end position="78"/>
    </location>
</feature>
<feature type="turn" evidence="4">
    <location>
        <begin position="79"/>
        <end position="81"/>
    </location>
</feature>
<feature type="helix" evidence="4">
    <location>
        <begin position="83"/>
        <end position="88"/>
    </location>
</feature>
<feature type="turn" evidence="4">
    <location>
        <begin position="89"/>
        <end position="92"/>
    </location>
</feature>
<feature type="helix" evidence="4">
    <location>
        <begin position="100"/>
        <end position="102"/>
    </location>
</feature>
<feature type="helix" evidence="4">
    <location>
        <begin position="109"/>
        <end position="111"/>
    </location>
</feature>
<feature type="helix" evidence="4">
    <location>
        <begin position="113"/>
        <end position="139"/>
    </location>
</feature>
<feature type="helix" evidence="4">
    <location>
        <begin position="145"/>
        <end position="161"/>
    </location>
</feature>
<feature type="helix" evidence="4">
    <location>
        <begin position="163"/>
        <end position="167"/>
    </location>
</feature>
<feature type="helix" evidence="4">
    <location>
        <begin position="171"/>
        <end position="173"/>
    </location>
</feature>
<feature type="helix" evidence="4">
    <location>
        <begin position="179"/>
        <end position="192"/>
    </location>
</feature>
<feature type="helix" evidence="4">
    <location>
        <begin position="196"/>
        <end position="198"/>
    </location>
</feature>
<feature type="helix" evidence="4">
    <location>
        <begin position="200"/>
        <end position="226"/>
    </location>
</feature>
<feature type="helix" evidence="4">
    <location>
        <begin position="227"/>
        <end position="229"/>
    </location>
</feature>
<feature type="turn" evidence="4">
    <location>
        <begin position="230"/>
        <end position="232"/>
    </location>
</feature>
<feature type="helix" evidence="4">
    <location>
        <begin position="234"/>
        <end position="239"/>
    </location>
</feature>
<feature type="helix" evidence="4">
    <location>
        <begin position="243"/>
        <end position="256"/>
    </location>
</feature>
<feature type="helix" evidence="4">
    <location>
        <begin position="264"/>
        <end position="286"/>
    </location>
</feature>
<feature type="turn" evidence="4">
    <location>
        <begin position="288"/>
        <end position="290"/>
    </location>
</feature>
<feature type="helix" evidence="4">
    <location>
        <begin position="294"/>
        <end position="300"/>
    </location>
</feature>
<feature type="helix" evidence="4">
    <location>
        <begin position="316"/>
        <end position="318"/>
    </location>
</feature>
<reference key="1">
    <citation type="submission" date="1998-03" db="EMBL/GenBank/DDBJ databases">
        <title>Primary structure of genes encoding light-harvesting and reaction center proteins from Chromatium vinosum.</title>
        <authorList>
            <person name="Corson G.E."/>
            <person name="Nagashima K.V."/>
            <person name="Matsuura K."/>
            <person name="Sakuragi Y."/>
            <person name="Ruwanthi W."/>
            <person name="Qin H."/>
            <person name="Allen R."/>
            <person name="Knaff D.B."/>
        </authorList>
    </citation>
    <scope>NUCLEOTIDE SEQUENCE [GENOMIC DNA]</scope>
</reference>
<reference key="2">
    <citation type="journal article" date="2011" name="Stand. Genomic Sci.">
        <title>Complete genome sequence of Allochromatium vinosum DSM 180(T).</title>
        <authorList>
            <person name="Weissgerber T."/>
            <person name="Zigann R."/>
            <person name="Bruce D."/>
            <person name="Chang Y.J."/>
            <person name="Detter J.C."/>
            <person name="Han C."/>
            <person name="Hauser L."/>
            <person name="Jeffries C.D."/>
            <person name="Land M."/>
            <person name="Munk A.C."/>
            <person name="Tapia R."/>
            <person name="Dahl C."/>
        </authorList>
    </citation>
    <scope>NUCLEOTIDE SEQUENCE [LARGE SCALE GENOMIC DNA]</scope>
    <source>
        <strain>ATCC 17899 / DSM 180 / NBRC 103801 / NCIMB 10441 / D</strain>
    </source>
</reference>
<reference key="3">
    <citation type="journal article" date="1997" name="J. Mol. Evol.">
        <title>Horizontal transfer of genes coding for the photosynthetic reaction centers of purple bacteria.</title>
        <authorList>
            <person name="Nagashima K.V."/>
            <person name="Hiraishi A."/>
            <person name="Shimada K."/>
            <person name="Matsuura K."/>
        </authorList>
    </citation>
    <scope>NUCLEOTIDE SEQUENCE [GENOMIC DNA] OF 1-257</scope>
</reference>
<keyword id="KW-0002">3D-structure</keyword>
<keyword id="KW-0076">Bacteriochlorophyll</keyword>
<keyword id="KW-0148">Chlorophyll</keyword>
<keyword id="KW-0157">Chromophore</keyword>
<keyword id="KW-0249">Electron transport</keyword>
<keyword id="KW-0408">Iron</keyword>
<keyword id="KW-0460">Magnesium</keyword>
<keyword id="KW-0472">Membrane</keyword>
<keyword id="KW-0479">Metal-binding</keyword>
<keyword id="KW-0602">Photosynthesis</keyword>
<keyword id="KW-0674">Reaction center</keyword>
<keyword id="KW-1185">Reference proteome</keyword>
<keyword id="KW-0812">Transmembrane</keyword>
<keyword id="KW-1133">Transmembrane helix</keyword>
<keyword id="KW-0813">Transport</keyword>
<proteinExistence type="evidence at protein level"/>
<comment type="function">
    <text>The reaction center is a membrane-bound complex that mediates the initial photochemical event in the electron transfer process of photosynthesis.</text>
</comment>
<comment type="subunit">
    <text>Reaction center is composed of four bacteriochlorophylls, two bacteriopheophytins, two ubiquinones, one iron, and two highly hydrophobic polypeptide chains (designated L and M).</text>
</comment>
<comment type="subcellular location">
    <subcellularLocation>
        <location evidence="1">Cellular chromatophore membrane</location>
        <topology evidence="1">Multi-pass membrane protein</topology>
    </subcellularLocation>
</comment>
<comment type="similarity">
    <text evidence="3">Belongs to the reaction center PufL/M/PsbA/D family.</text>
</comment>
<evidence type="ECO:0000250" key="1"/>
<evidence type="ECO:0000255" key="2"/>
<evidence type="ECO:0000305" key="3"/>
<evidence type="ECO:0007829" key="4">
    <source>
        <dbReference type="PDB" id="8WDU"/>
    </source>
</evidence>
<evidence type="ECO:0007829" key="5">
    <source>
        <dbReference type="PDB" id="8WDV"/>
    </source>
</evidence>
<accession>P51763</accession>
<accession>D3RP72</accession>
<accession>O82946</accession>
<protein>
    <recommendedName>
        <fullName>Reaction center protein M chain</fullName>
    </recommendedName>
    <alternativeName>
        <fullName>Photosynthetic reaction center M subunit</fullName>
    </alternativeName>
</protein>
<organism>
    <name type="scientific">Allochromatium vinosum (strain ATCC 17899 / DSM 180 / NBRC 103801 / NCIMB 10441 / D)</name>
    <name type="common">Chromatium vinosum</name>
    <dbReference type="NCBI Taxonomy" id="572477"/>
    <lineage>
        <taxon>Bacteria</taxon>
        <taxon>Pseudomonadati</taxon>
        <taxon>Pseudomonadota</taxon>
        <taxon>Gammaproteobacteria</taxon>
        <taxon>Chromatiales</taxon>
        <taxon>Chromatiaceae</taxon>
        <taxon>Allochromatium</taxon>
    </lineage>
</organism>
<gene>
    <name type="primary">pufM</name>
    <name type="ordered locus">Alvin_2552</name>
</gene>
<sequence length="325" mass="36339">MPEYQNIFTTVQVRAPAYPGVPLPKGSLPRIGKPIFSYWAGKIGDAQIGPIYLGFTGTLSIIFGFMAIFIIGFNMLASVDWNIIQFVKHFFWLGLEPPAPQYGLTIPPLSEGGWWLMAGFFLTMSILLWWVRTYKRAEALGMSQHLSWAFAAAIFFYLSLGFIRPVMMGSWAEAVPFGIFPHLDWTAAFSIRYGNLYYNPFHMLSIAFLYGSALLFAMHGATILAVSRFGGDREIDQITDRGTAAERAAIFWRWTMGFNASMESIHRWAWWCAVLTVITAGIGILLTGTVVENWYLWAIKHGVAPAYPEVVTAVDPYATATGVTQ</sequence>
<dbReference type="EMBL" id="AB011811">
    <property type="protein sequence ID" value="BAA32741.1"/>
    <property type="molecule type" value="Genomic_DNA"/>
</dbReference>
<dbReference type="EMBL" id="CP001896">
    <property type="protein sequence ID" value="ADC63462.1"/>
    <property type="molecule type" value="Genomic_DNA"/>
</dbReference>
<dbReference type="EMBL" id="D50647">
    <property type="protein sequence ID" value="BAA21083.1"/>
    <property type="molecule type" value="Genomic_DNA"/>
</dbReference>
<dbReference type="RefSeq" id="WP_012971731.1">
    <property type="nucleotide sequence ID" value="NC_013851.1"/>
</dbReference>
<dbReference type="PDB" id="8WDU">
    <property type="method" value="EM"/>
    <property type="resolution" value="2.24 A"/>
    <property type="chains" value="M=1-325"/>
</dbReference>
<dbReference type="PDB" id="8WDV">
    <property type="method" value="EM"/>
    <property type="resolution" value="2.24 A"/>
    <property type="chains" value="M=1-325"/>
</dbReference>
<dbReference type="PDBsum" id="8WDU"/>
<dbReference type="PDBsum" id="8WDV"/>
<dbReference type="EMDB" id="EMD-37465"/>
<dbReference type="EMDB" id="EMD-37466"/>
<dbReference type="SMR" id="P51763"/>
<dbReference type="STRING" id="572477.Alvin_2552"/>
<dbReference type="KEGG" id="alv:Alvin_2552"/>
<dbReference type="eggNOG" id="ENOG502Z87P">
    <property type="taxonomic scope" value="Bacteria"/>
</dbReference>
<dbReference type="HOGENOM" id="CLU_078782_0_0_6"/>
<dbReference type="OrthoDB" id="8555181at2"/>
<dbReference type="Proteomes" id="UP000001441">
    <property type="component" value="Chromosome"/>
</dbReference>
<dbReference type="GO" id="GO:0030077">
    <property type="term" value="C:plasma membrane light-harvesting complex"/>
    <property type="evidence" value="ECO:0007669"/>
    <property type="project" value="InterPro"/>
</dbReference>
<dbReference type="GO" id="GO:0042717">
    <property type="term" value="C:plasma membrane-derived chromatophore membrane"/>
    <property type="evidence" value="ECO:0007669"/>
    <property type="project" value="UniProtKB-SubCell"/>
</dbReference>
<dbReference type="GO" id="GO:0042314">
    <property type="term" value="F:bacteriochlorophyll binding"/>
    <property type="evidence" value="ECO:0007669"/>
    <property type="project" value="UniProtKB-KW"/>
</dbReference>
<dbReference type="GO" id="GO:0045156">
    <property type="term" value="F:electron transporter, transferring electrons within the cyclic electron transport pathway of photosynthesis activity"/>
    <property type="evidence" value="ECO:0007669"/>
    <property type="project" value="InterPro"/>
</dbReference>
<dbReference type="GO" id="GO:0046872">
    <property type="term" value="F:metal ion binding"/>
    <property type="evidence" value="ECO:0007669"/>
    <property type="project" value="UniProtKB-KW"/>
</dbReference>
<dbReference type="GO" id="GO:0009772">
    <property type="term" value="P:photosynthetic electron transport in photosystem II"/>
    <property type="evidence" value="ECO:0007669"/>
    <property type="project" value="InterPro"/>
</dbReference>
<dbReference type="CDD" id="cd09291">
    <property type="entry name" value="Photo-RC_M"/>
    <property type="match status" value="1"/>
</dbReference>
<dbReference type="Gene3D" id="1.20.85.10">
    <property type="entry name" value="Photosystem II protein D1-like"/>
    <property type="match status" value="2"/>
</dbReference>
<dbReference type="InterPro" id="IPR036854">
    <property type="entry name" value="Photo_II_D1/D2_sf"/>
</dbReference>
<dbReference type="InterPro" id="IPR000484">
    <property type="entry name" value="Photo_RC_L/M"/>
</dbReference>
<dbReference type="InterPro" id="IPR055265">
    <property type="entry name" value="Photo_RC_L/M_CS"/>
</dbReference>
<dbReference type="InterPro" id="IPR005781">
    <property type="entry name" value="Photo_RC_M"/>
</dbReference>
<dbReference type="NCBIfam" id="TIGR01115">
    <property type="entry name" value="pufM"/>
    <property type="match status" value="1"/>
</dbReference>
<dbReference type="Pfam" id="PF00124">
    <property type="entry name" value="Photo_RC"/>
    <property type="match status" value="1"/>
</dbReference>
<dbReference type="PRINTS" id="PR00256">
    <property type="entry name" value="REACTNCENTRE"/>
</dbReference>
<dbReference type="SUPFAM" id="SSF81483">
    <property type="entry name" value="Bacterial photosystem II reaction centre, L and M subunits"/>
    <property type="match status" value="1"/>
</dbReference>
<dbReference type="PROSITE" id="PS00244">
    <property type="entry name" value="REACTION_CENTER"/>
    <property type="match status" value="1"/>
</dbReference>
<name>RCEM_ALLVD</name>